<gene>
    <name evidence="1" type="primary">hldE</name>
    <name type="ordered locus">Sputw3181_0876</name>
</gene>
<reference key="1">
    <citation type="submission" date="2006-12" db="EMBL/GenBank/DDBJ databases">
        <title>Complete sequence of Shewanella sp. W3-18-1.</title>
        <authorList>
            <consortium name="US DOE Joint Genome Institute"/>
            <person name="Copeland A."/>
            <person name="Lucas S."/>
            <person name="Lapidus A."/>
            <person name="Barry K."/>
            <person name="Detter J.C."/>
            <person name="Glavina del Rio T."/>
            <person name="Hammon N."/>
            <person name="Israni S."/>
            <person name="Dalin E."/>
            <person name="Tice H."/>
            <person name="Pitluck S."/>
            <person name="Chain P."/>
            <person name="Malfatti S."/>
            <person name="Shin M."/>
            <person name="Vergez L."/>
            <person name="Schmutz J."/>
            <person name="Larimer F."/>
            <person name="Land M."/>
            <person name="Hauser L."/>
            <person name="Kyrpides N."/>
            <person name="Lykidis A."/>
            <person name="Tiedje J."/>
            <person name="Richardson P."/>
        </authorList>
    </citation>
    <scope>NUCLEOTIDE SEQUENCE [LARGE SCALE GENOMIC DNA]</scope>
    <source>
        <strain>W3-18-1</strain>
    </source>
</reference>
<accession>A1RGD1</accession>
<evidence type="ECO:0000255" key="1">
    <source>
        <dbReference type="HAMAP-Rule" id="MF_01603"/>
    </source>
</evidence>
<name>HLDE_SHESW</name>
<dbReference type="EC" id="2.7.1.167" evidence="1"/>
<dbReference type="EC" id="2.7.7.70" evidence="1"/>
<dbReference type="EMBL" id="CP000503">
    <property type="protein sequence ID" value="ABM23726.1"/>
    <property type="molecule type" value="Genomic_DNA"/>
</dbReference>
<dbReference type="RefSeq" id="WP_011788253.1">
    <property type="nucleotide sequence ID" value="NC_008750.1"/>
</dbReference>
<dbReference type="SMR" id="A1RGD1"/>
<dbReference type="KEGG" id="shw:Sputw3181_0876"/>
<dbReference type="HOGENOM" id="CLU_021150_2_1_6"/>
<dbReference type="UniPathway" id="UPA00356">
    <property type="reaction ID" value="UER00437"/>
</dbReference>
<dbReference type="UniPathway" id="UPA00356">
    <property type="reaction ID" value="UER00439"/>
</dbReference>
<dbReference type="Proteomes" id="UP000002597">
    <property type="component" value="Chromosome"/>
</dbReference>
<dbReference type="GO" id="GO:0005829">
    <property type="term" value="C:cytosol"/>
    <property type="evidence" value="ECO:0007669"/>
    <property type="project" value="TreeGrafter"/>
</dbReference>
<dbReference type="GO" id="GO:0005524">
    <property type="term" value="F:ATP binding"/>
    <property type="evidence" value="ECO:0007669"/>
    <property type="project" value="UniProtKB-UniRule"/>
</dbReference>
<dbReference type="GO" id="GO:0033785">
    <property type="term" value="F:heptose 7-phosphate kinase activity"/>
    <property type="evidence" value="ECO:0007669"/>
    <property type="project" value="UniProtKB-UniRule"/>
</dbReference>
<dbReference type="GO" id="GO:0033786">
    <property type="term" value="F:heptose-1-phosphate adenylyltransferase activity"/>
    <property type="evidence" value="ECO:0007669"/>
    <property type="project" value="UniProtKB-UniRule"/>
</dbReference>
<dbReference type="GO" id="GO:0016773">
    <property type="term" value="F:phosphotransferase activity, alcohol group as acceptor"/>
    <property type="evidence" value="ECO:0007669"/>
    <property type="project" value="InterPro"/>
</dbReference>
<dbReference type="GO" id="GO:0097171">
    <property type="term" value="P:ADP-L-glycero-beta-D-manno-heptose biosynthetic process"/>
    <property type="evidence" value="ECO:0007669"/>
    <property type="project" value="UniProtKB-UniPathway"/>
</dbReference>
<dbReference type="CDD" id="cd01172">
    <property type="entry name" value="RfaE_like"/>
    <property type="match status" value="1"/>
</dbReference>
<dbReference type="FunFam" id="3.40.1190.20:FF:000002">
    <property type="entry name" value="Bifunctional protein HldE"/>
    <property type="match status" value="1"/>
</dbReference>
<dbReference type="FunFam" id="3.40.50.620:FF:000028">
    <property type="entry name" value="Bifunctional protein HldE"/>
    <property type="match status" value="1"/>
</dbReference>
<dbReference type="Gene3D" id="3.40.1190.20">
    <property type="match status" value="1"/>
</dbReference>
<dbReference type="Gene3D" id="3.40.50.620">
    <property type="entry name" value="HUPs"/>
    <property type="match status" value="1"/>
</dbReference>
<dbReference type="HAMAP" id="MF_01603">
    <property type="entry name" value="HldE"/>
    <property type="match status" value="1"/>
</dbReference>
<dbReference type="InterPro" id="IPR023030">
    <property type="entry name" value="Bifunc_HldE"/>
</dbReference>
<dbReference type="InterPro" id="IPR002173">
    <property type="entry name" value="Carboh/pur_kinase_PfkB_CS"/>
</dbReference>
<dbReference type="InterPro" id="IPR004821">
    <property type="entry name" value="Cyt_trans-like"/>
</dbReference>
<dbReference type="InterPro" id="IPR011611">
    <property type="entry name" value="PfkB_dom"/>
</dbReference>
<dbReference type="InterPro" id="IPR011913">
    <property type="entry name" value="RfaE_dom_I"/>
</dbReference>
<dbReference type="InterPro" id="IPR011914">
    <property type="entry name" value="RfaE_dom_II"/>
</dbReference>
<dbReference type="InterPro" id="IPR029056">
    <property type="entry name" value="Ribokinase-like"/>
</dbReference>
<dbReference type="InterPro" id="IPR014729">
    <property type="entry name" value="Rossmann-like_a/b/a_fold"/>
</dbReference>
<dbReference type="NCBIfam" id="TIGR00125">
    <property type="entry name" value="cyt_tran_rel"/>
    <property type="match status" value="1"/>
</dbReference>
<dbReference type="NCBIfam" id="NF008454">
    <property type="entry name" value="PRK11316.1"/>
    <property type="match status" value="1"/>
</dbReference>
<dbReference type="NCBIfam" id="TIGR02198">
    <property type="entry name" value="rfaE_dom_I"/>
    <property type="match status" value="1"/>
</dbReference>
<dbReference type="NCBIfam" id="TIGR02199">
    <property type="entry name" value="rfaE_dom_II"/>
    <property type="match status" value="1"/>
</dbReference>
<dbReference type="PANTHER" id="PTHR46969">
    <property type="entry name" value="BIFUNCTIONAL PROTEIN HLDE"/>
    <property type="match status" value="1"/>
</dbReference>
<dbReference type="PANTHER" id="PTHR46969:SF1">
    <property type="entry name" value="BIFUNCTIONAL PROTEIN HLDE"/>
    <property type="match status" value="1"/>
</dbReference>
<dbReference type="Pfam" id="PF01467">
    <property type="entry name" value="CTP_transf_like"/>
    <property type="match status" value="1"/>
</dbReference>
<dbReference type="Pfam" id="PF00294">
    <property type="entry name" value="PfkB"/>
    <property type="match status" value="1"/>
</dbReference>
<dbReference type="SUPFAM" id="SSF52374">
    <property type="entry name" value="Nucleotidylyl transferase"/>
    <property type="match status" value="1"/>
</dbReference>
<dbReference type="SUPFAM" id="SSF53613">
    <property type="entry name" value="Ribokinase-like"/>
    <property type="match status" value="1"/>
</dbReference>
<dbReference type="PROSITE" id="PS00583">
    <property type="entry name" value="PFKB_KINASES_1"/>
    <property type="match status" value="1"/>
</dbReference>
<dbReference type="PROSITE" id="PS00584">
    <property type="entry name" value="PFKB_KINASES_2"/>
    <property type="match status" value="1"/>
</dbReference>
<organism>
    <name type="scientific">Shewanella sp. (strain W3-18-1)</name>
    <dbReference type="NCBI Taxonomy" id="351745"/>
    <lineage>
        <taxon>Bacteria</taxon>
        <taxon>Pseudomonadati</taxon>
        <taxon>Pseudomonadota</taxon>
        <taxon>Gammaproteobacteria</taxon>
        <taxon>Alteromonadales</taxon>
        <taxon>Shewanellaceae</taxon>
        <taxon>Shewanella</taxon>
    </lineage>
</organism>
<feature type="chain" id="PRO_0000291693" description="Bifunctional protein HldE">
    <location>
        <begin position="1"/>
        <end position="476"/>
    </location>
</feature>
<feature type="region of interest" description="Ribokinase">
    <location>
        <begin position="1"/>
        <end position="319"/>
    </location>
</feature>
<feature type="region of interest" description="Cytidylyltransferase">
    <location>
        <begin position="345"/>
        <end position="476"/>
    </location>
</feature>
<feature type="active site" evidence="1">
    <location>
        <position position="264"/>
    </location>
</feature>
<feature type="binding site" evidence="1">
    <location>
        <begin position="195"/>
        <end position="198"/>
    </location>
    <ligand>
        <name>ATP</name>
        <dbReference type="ChEBI" id="CHEBI:30616"/>
    </ligand>
</feature>
<protein>
    <recommendedName>
        <fullName evidence="1">Bifunctional protein HldE</fullName>
    </recommendedName>
    <domain>
        <recommendedName>
            <fullName evidence="1">D-beta-D-heptose 7-phosphate kinase</fullName>
            <ecNumber evidence="1">2.7.1.167</ecNumber>
        </recommendedName>
        <alternativeName>
            <fullName evidence="1">D-beta-D-heptose 7-phosphotransferase</fullName>
        </alternativeName>
        <alternativeName>
            <fullName evidence="1">D-glycero-beta-D-manno-heptose-7-phosphate kinase</fullName>
        </alternativeName>
    </domain>
    <domain>
        <recommendedName>
            <fullName evidence="1">D-beta-D-heptose 1-phosphate adenylyltransferase</fullName>
            <ecNumber evidence="1">2.7.7.70</ecNumber>
        </recommendedName>
        <alternativeName>
            <fullName evidence="1">D-glycero-beta-D-manno-heptose 1-phosphate adenylyltransferase</fullName>
        </alternativeName>
    </domain>
</protein>
<sequence>MKVSLPAFEKARVLVVGDVMLDRYWVGPTGRISPEAPVPVVKINQVEDRPGGAANVALNIATLGGQVQLAGLVGQDDTAIALTLGVQTLGVEPQWLSIADKPTITKLRVLSRNQQLIRLDFEEAFDKADSVRLLKQSEALLDSIDVVVLSDYAKGAIDQPRDFIALARSKGVMVLVDPKGSDFGRYHGASLITPNMSEFEAVVGTVTSEADLLEKARGLLKEHHFDAILVTRSEKGMTLVTANAPELHIPTVAREVYDVTGAGDTVISALATSLAAGADLPQACAIANTAAGVVVGKLGTSTVSRIELIEALALHHGESGFGVVSEDQLAYALEQAKLRGERVVMTNGCFDILHAGHVSYLKQAKALGDRLIVAVNDDASVKRLKGEGRPVNQVDRRMAVLAGLASVDWVVPFSEDTPQRIIARLLPDLLVKGGDYKIEDIAGGAEVIAAGGQVQVLGFEDGISTTAIIQNIMANQ</sequence>
<comment type="function">
    <text evidence="1">Catalyzes the phosphorylation of D-glycero-D-manno-heptose 7-phosphate at the C-1 position to selectively form D-glycero-beta-D-manno-heptose-1,7-bisphosphate.</text>
</comment>
<comment type="function">
    <text evidence="1">Catalyzes the ADP transfer from ATP to D-glycero-beta-D-manno-heptose 1-phosphate, yielding ADP-D-glycero-beta-D-manno-heptose.</text>
</comment>
<comment type="catalytic activity">
    <reaction evidence="1">
        <text>D-glycero-beta-D-manno-heptose 7-phosphate + ATP = D-glycero-beta-D-manno-heptose 1,7-bisphosphate + ADP + H(+)</text>
        <dbReference type="Rhea" id="RHEA:27473"/>
        <dbReference type="ChEBI" id="CHEBI:15378"/>
        <dbReference type="ChEBI" id="CHEBI:30616"/>
        <dbReference type="ChEBI" id="CHEBI:60204"/>
        <dbReference type="ChEBI" id="CHEBI:60208"/>
        <dbReference type="ChEBI" id="CHEBI:456216"/>
        <dbReference type="EC" id="2.7.1.167"/>
    </reaction>
</comment>
<comment type="catalytic activity">
    <reaction evidence="1">
        <text>D-glycero-beta-D-manno-heptose 1-phosphate + ATP + H(+) = ADP-D-glycero-beta-D-manno-heptose + diphosphate</text>
        <dbReference type="Rhea" id="RHEA:27465"/>
        <dbReference type="ChEBI" id="CHEBI:15378"/>
        <dbReference type="ChEBI" id="CHEBI:30616"/>
        <dbReference type="ChEBI" id="CHEBI:33019"/>
        <dbReference type="ChEBI" id="CHEBI:59967"/>
        <dbReference type="ChEBI" id="CHEBI:61593"/>
        <dbReference type="EC" id="2.7.7.70"/>
    </reaction>
</comment>
<comment type="pathway">
    <text evidence="1">Nucleotide-sugar biosynthesis; ADP-L-glycero-beta-D-manno-heptose biosynthesis; ADP-L-glycero-beta-D-manno-heptose from D-glycero-beta-D-manno-heptose 7-phosphate: step 1/4.</text>
</comment>
<comment type="pathway">
    <text evidence="1">Nucleotide-sugar biosynthesis; ADP-L-glycero-beta-D-manno-heptose biosynthesis; ADP-L-glycero-beta-D-manno-heptose from D-glycero-beta-D-manno-heptose 7-phosphate: step 3/4.</text>
</comment>
<comment type="subunit">
    <text evidence="1">Homodimer.</text>
</comment>
<comment type="similarity">
    <text evidence="1">In the N-terminal section; belongs to the carbohydrate kinase PfkB family.</text>
</comment>
<comment type="similarity">
    <text evidence="1">In the C-terminal section; belongs to the cytidylyltransferase family.</text>
</comment>
<keyword id="KW-0067">ATP-binding</keyword>
<keyword id="KW-0119">Carbohydrate metabolism</keyword>
<keyword id="KW-0418">Kinase</keyword>
<keyword id="KW-0511">Multifunctional enzyme</keyword>
<keyword id="KW-0547">Nucleotide-binding</keyword>
<keyword id="KW-0548">Nucleotidyltransferase</keyword>
<keyword id="KW-0808">Transferase</keyword>
<proteinExistence type="inferred from homology"/>